<proteinExistence type="inferred from homology"/>
<gene>
    <name evidence="1" type="primary">rsmA</name>
    <name evidence="1" type="synonym">ksgA</name>
    <name type="ordered locus">BCE_0039</name>
</gene>
<keyword id="KW-0963">Cytoplasm</keyword>
<keyword id="KW-0489">Methyltransferase</keyword>
<keyword id="KW-0694">RNA-binding</keyword>
<keyword id="KW-0698">rRNA processing</keyword>
<keyword id="KW-0949">S-adenosyl-L-methionine</keyword>
<keyword id="KW-0808">Transferase</keyword>
<protein>
    <recommendedName>
        <fullName evidence="1">Ribosomal RNA small subunit methyltransferase A</fullName>
        <ecNumber evidence="1">2.1.1.182</ecNumber>
    </recommendedName>
    <alternativeName>
        <fullName evidence="1">16S rRNA (adenine(1518)-N(6)/adenine(1519)-N(6))-dimethyltransferase</fullName>
    </alternativeName>
    <alternativeName>
        <fullName evidence="1">16S rRNA dimethyladenosine transferase</fullName>
    </alternativeName>
    <alternativeName>
        <fullName evidence="1">16S rRNA dimethylase</fullName>
    </alternativeName>
    <alternativeName>
        <fullName evidence="1">S-adenosylmethionine-6-N', N'-adenosyl(rRNA) dimethyltransferase</fullName>
    </alternativeName>
</protein>
<comment type="function">
    <text evidence="1">Specifically dimethylates two adjacent adenosines (A1518 and A1519) in the loop of a conserved hairpin near the 3'-end of 16S rRNA in the 30S particle. May play a critical role in biogenesis of 30S subunits.</text>
</comment>
<comment type="catalytic activity">
    <reaction evidence="1">
        <text>adenosine(1518)/adenosine(1519) in 16S rRNA + 4 S-adenosyl-L-methionine = N(6)-dimethyladenosine(1518)/N(6)-dimethyladenosine(1519) in 16S rRNA + 4 S-adenosyl-L-homocysteine + 4 H(+)</text>
        <dbReference type="Rhea" id="RHEA:19609"/>
        <dbReference type="Rhea" id="RHEA-COMP:10232"/>
        <dbReference type="Rhea" id="RHEA-COMP:10233"/>
        <dbReference type="ChEBI" id="CHEBI:15378"/>
        <dbReference type="ChEBI" id="CHEBI:57856"/>
        <dbReference type="ChEBI" id="CHEBI:59789"/>
        <dbReference type="ChEBI" id="CHEBI:74411"/>
        <dbReference type="ChEBI" id="CHEBI:74493"/>
        <dbReference type="EC" id="2.1.1.182"/>
    </reaction>
</comment>
<comment type="subcellular location">
    <subcellularLocation>
        <location evidence="1">Cytoplasm</location>
    </subcellularLocation>
</comment>
<comment type="similarity">
    <text evidence="1">Belongs to the class I-like SAM-binding methyltransferase superfamily. rRNA adenine N(6)-methyltransferase family. RsmA subfamily.</text>
</comment>
<organism>
    <name type="scientific">Bacillus cereus (strain ATCC 10987 / NRS 248)</name>
    <dbReference type="NCBI Taxonomy" id="222523"/>
    <lineage>
        <taxon>Bacteria</taxon>
        <taxon>Bacillati</taxon>
        <taxon>Bacillota</taxon>
        <taxon>Bacilli</taxon>
        <taxon>Bacillales</taxon>
        <taxon>Bacillaceae</taxon>
        <taxon>Bacillus</taxon>
        <taxon>Bacillus cereus group</taxon>
    </lineage>
</organism>
<sequence length="292" mass="32768">MKDIATPNRTKDIVEKYGFSFKKSLGQNFLIDTNVLNRIVDHAEIGSESGAIEIGPGIGALTEQLAKRAKKVVAFEIDQRLLPILDETLAPYGNVTVINKDVLKADVHEVFSEQFEEGQDVMVVANLPYYITTPILFKLLEEKLPVRGFVVMMQKEVGDRLAAKPGTKEYGSLSIAIQYYTEVETVMTVPRTVFVPQPNVDSAIIRLLKRPKPVVEVTDETFFFEVVRASFAQRRKTLMNNLSNNLNGFPKDKELLDRILTEVGIDPKRRGETLSIEEFATLSNALVLHKLS</sequence>
<name>RSMA_BACC1</name>
<accession>Q73FG7</accession>
<reference key="1">
    <citation type="journal article" date="2004" name="Nucleic Acids Res.">
        <title>The genome sequence of Bacillus cereus ATCC 10987 reveals metabolic adaptations and a large plasmid related to Bacillus anthracis pXO1.</title>
        <authorList>
            <person name="Rasko D.A."/>
            <person name="Ravel J."/>
            <person name="Oekstad O.A."/>
            <person name="Helgason E."/>
            <person name="Cer R.Z."/>
            <person name="Jiang L."/>
            <person name="Shores K.A."/>
            <person name="Fouts D.E."/>
            <person name="Tourasse N.J."/>
            <person name="Angiuoli S.V."/>
            <person name="Kolonay J.F."/>
            <person name="Nelson W.C."/>
            <person name="Kolstoe A.-B."/>
            <person name="Fraser C.M."/>
            <person name="Read T.D."/>
        </authorList>
    </citation>
    <scope>NUCLEOTIDE SEQUENCE [LARGE SCALE GENOMIC DNA]</scope>
    <source>
        <strain>ATCC 10987 / NRS 248</strain>
    </source>
</reference>
<evidence type="ECO:0000255" key="1">
    <source>
        <dbReference type="HAMAP-Rule" id="MF_00607"/>
    </source>
</evidence>
<dbReference type="EC" id="2.1.1.182" evidence="1"/>
<dbReference type="EMBL" id="AE017194">
    <property type="protein sequence ID" value="AAS38975.1"/>
    <property type="molecule type" value="Genomic_DNA"/>
</dbReference>
<dbReference type="SMR" id="Q73FG7"/>
<dbReference type="KEGG" id="bca:BCE_0039"/>
<dbReference type="HOGENOM" id="CLU_041220_0_0_9"/>
<dbReference type="Proteomes" id="UP000002527">
    <property type="component" value="Chromosome"/>
</dbReference>
<dbReference type="GO" id="GO:0005829">
    <property type="term" value="C:cytosol"/>
    <property type="evidence" value="ECO:0007669"/>
    <property type="project" value="TreeGrafter"/>
</dbReference>
<dbReference type="GO" id="GO:0052908">
    <property type="term" value="F:16S rRNA (adenine(1518)-N(6)/adenine(1519)-N(6))-dimethyltransferase activity"/>
    <property type="evidence" value="ECO:0007669"/>
    <property type="project" value="UniProtKB-EC"/>
</dbReference>
<dbReference type="GO" id="GO:0003723">
    <property type="term" value="F:RNA binding"/>
    <property type="evidence" value="ECO:0007669"/>
    <property type="project" value="UniProtKB-KW"/>
</dbReference>
<dbReference type="CDD" id="cd02440">
    <property type="entry name" value="AdoMet_MTases"/>
    <property type="match status" value="1"/>
</dbReference>
<dbReference type="FunFam" id="1.10.8.100:FF:000002">
    <property type="entry name" value="Ribosomal RNA small subunit methyltransferase A"/>
    <property type="match status" value="1"/>
</dbReference>
<dbReference type="FunFam" id="3.40.50.150:FF:000023">
    <property type="entry name" value="Ribosomal RNA small subunit methyltransferase A"/>
    <property type="match status" value="1"/>
</dbReference>
<dbReference type="Gene3D" id="1.10.8.100">
    <property type="entry name" value="Ribosomal RNA adenine dimethylase-like, domain 2"/>
    <property type="match status" value="1"/>
</dbReference>
<dbReference type="Gene3D" id="3.40.50.150">
    <property type="entry name" value="Vaccinia Virus protein VP39"/>
    <property type="match status" value="1"/>
</dbReference>
<dbReference type="HAMAP" id="MF_00607">
    <property type="entry name" value="16SrRNA_methyltr_A"/>
    <property type="match status" value="1"/>
</dbReference>
<dbReference type="InterPro" id="IPR001737">
    <property type="entry name" value="KsgA/Erm"/>
</dbReference>
<dbReference type="InterPro" id="IPR023165">
    <property type="entry name" value="rRNA_Ade_diMease-like_C"/>
</dbReference>
<dbReference type="InterPro" id="IPR020596">
    <property type="entry name" value="rRNA_Ade_Mease_Trfase_CS"/>
</dbReference>
<dbReference type="InterPro" id="IPR020598">
    <property type="entry name" value="rRNA_Ade_methylase_Trfase_N"/>
</dbReference>
<dbReference type="InterPro" id="IPR011530">
    <property type="entry name" value="rRNA_adenine_dimethylase"/>
</dbReference>
<dbReference type="InterPro" id="IPR029063">
    <property type="entry name" value="SAM-dependent_MTases_sf"/>
</dbReference>
<dbReference type="NCBIfam" id="TIGR00755">
    <property type="entry name" value="ksgA"/>
    <property type="match status" value="1"/>
</dbReference>
<dbReference type="PANTHER" id="PTHR11727">
    <property type="entry name" value="DIMETHYLADENOSINE TRANSFERASE"/>
    <property type="match status" value="1"/>
</dbReference>
<dbReference type="PANTHER" id="PTHR11727:SF7">
    <property type="entry name" value="DIMETHYLADENOSINE TRANSFERASE-RELATED"/>
    <property type="match status" value="1"/>
</dbReference>
<dbReference type="Pfam" id="PF00398">
    <property type="entry name" value="RrnaAD"/>
    <property type="match status" value="1"/>
</dbReference>
<dbReference type="SMART" id="SM00650">
    <property type="entry name" value="rADc"/>
    <property type="match status" value="1"/>
</dbReference>
<dbReference type="SUPFAM" id="SSF53335">
    <property type="entry name" value="S-adenosyl-L-methionine-dependent methyltransferases"/>
    <property type="match status" value="1"/>
</dbReference>
<dbReference type="PROSITE" id="PS01131">
    <property type="entry name" value="RRNA_A_DIMETH"/>
    <property type="match status" value="1"/>
</dbReference>
<dbReference type="PROSITE" id="PS51689">
    <property type="entry name" value="SAM_RNA_A_N6_MT"/>
    <property type="match status" value="1"/>
</dbReference>
<feature type="chain" id="PRO_0000101477" description="Ribosomal RNA small subunit methyltransferase A">
    <location>
        <begin position="1"/>
        <end position="292"/>
    </location>
</feature>
<feature type="binding site" evidence="1">
    <location>
        <position position="28"/>
    </location>
    <ligand>
        <name>S-adenosyl-L-methionine</name>
        <dbReference type="ChEBI" id="CHEBI:59789"/>
    </ligand>
</feature>
<feature type="binding site" evidence="1">
    <location>
        <position position="30"/>
    </location>
    <ligand>
        <name>S-adenosyl-L-methionine</name>
        <dbReference type="ChEBI" id="CHEBI:59789"/>
    </ligand>
</feature>
<feature type="binding site" evidence="1">
    <location>
        <position position="55"/>
    </location>
    <ligand>
        <name>S-adenosyl-L-methionine</name>
        <dbReference type="ChEBI" id="CHEBI:59789"/>
    </ligand>
</feature>
<feature type="binding site" evidence="1">
    <location>
        <position position="76"/>
    </location>
    <ligand>
        <name>S-adenosyl-L-methionine</name>
        <dbReference type="ChEBI" id="CHEBI:59789"/>
    </ligand>
</feature>
<feature type="binding site" evidence="1">
    <location>
        <position position="101"/>
    </location>
    <ligand>
        <name>S-adenosyl-L-methionine</name>
        <dbReference type="ChEBI" id="CHEBI:59789"/>
    </ligand>
</feature>
<feature type="binding site" evidence="1">
    <location>
        <position position="126"/>
    </location>
    <ligand>
        <name>S-adenosyl-L-methionine</name>
        <dbReference type="ChEBI" id="CHEBI:59789"/>
    </ligand>
</feature>